<comment type="function">
    <text evidence="3 4">Alpha toxins bind voltage-independently at site-3 of sodium channels (Nav) and inhibit the inactivation of the activated channels, thereby blocking neuronal transmission. This toxin inhibits inactivation of Nav1.6/SCN8A (EC(50)=790 nM) and drosophila DmNav1 (EC(50)=280 nM) (PubMed:21969612, Ref.2). The toxin (1 uM) does not significantly shift the midpoint of activation at the two channels, but induces a significant depolarizing shift in the V(1/2) of inactivation of the channels (PubMed:21969612). Has antimicrobial activity (Ref.2).</text>
</comment>
<comment type="subcellular location">
    <subcellularLocation>
        <location evidence="3 4">Secreted</location>
    </subcellularLocation>
</comment>
<comment type="tissue specificity">
    <text evidence="7 8">Expressed by the venom gland.</text>
</comment>
<comment type="domain">
    <text evidence="6">Has the structural arrangement of an alpha-helix connected to antiparallel beta-sheets by disulfide bonds (CS-alpha/beta).</text>
</comment>
<comment type="mass spectrometry" mass="7170.47" method="MALDI" evidence="3"/>
<comment type="miscellaneous">
    <text evidence="3">Negative results: shows no effect on Nav1.2/SCN2A and Nav1.8/SCN10A (PubMed:21969612). Shows a weak inhibition of inactivation on Nav1.3/SCN3A, Nav1.4/SCN4A, Nav1.5/SCN5A, and Nav1.7/SCN9A.</text>
</comment>
<comment type="similarity">
    <text evidence="1">Belongs to the long (4 C-C) scorpion toxin superfamily. Sodium channel inhibitor family. Alpha subfamily.</text>
</comment>
<sequence length="86" mass="9414">MNYLILISFALLVITGVESARDAYIAKPHNCVYECFDAFSSYCNGVCTKNGAKSGYCQILGTYGNGCWCIALPDNVPIRIPGKCHR</sequence>
<reference key="1">
    <citation type="journal article" date="2012" name="Mol. Cell. Proteomics">
        <title>Evolutionary diversification of Mesobuthus alpha-scorpion toxins affecting sodium channels.</title>
        <authorList>
            <person name="Zhu S."/>
            <person name="Peigneur S."/>
            <person name="Gao B."/>
            <person name="Lu X."/>
            <person name="Cao C."/>
            <person name="Tytgat J."/>
        </authorList>
    </citation>
    <scope>NUCLEOTIDE SEQUENCE [GENOMIC DNA / MRNA]</scope>
    <scope>PROTEIN SEQUENCE OF 20-39</scope>
    <scope>STRUCTURE BY NMR OF 20-85</scope>
    <scope>FUNCTION</scope>
    <scope>SUBCELLULAR LOCATION</scope>
    <scope>MASS SPECTROMETRY</scope>
    <source>
        <tissue>Venom</tissue>
        <tissue>Venom gland</tissue>
    </source>
</reference>
<reference key="2">
    <citation type="submission" date="2009-11" db="UniProtKB">
        <title>Characterization of a sodium channel toxin from the scorpion Mesobuthus eupeus venom.</title>
        <authorList>
            <person name="Zhu S.Y."/>
            <person name="Gao B."/>
        </authorList>
    </citation>
    <scope>PROTEIN SEQUENCE OF 20-85</scope>
    <scope>FUNCTION</scope>
    <scope>SUBCELLULAR LOCATION</scope>
    <scope>MASS SPECTROMETRY</scope>
    <source>
        <tissue>Venom</tissue>
    </source>
</reference>
<dbReference type="EMBL" id="HM992827">
    <property type="protein sequence ID" value="ADU05409.1"/>
    <property type="molecule type" value="Genomic_DNA"/>
</dbReference>
<dbReference type="EMBL" id="GQ249199">
    <property type="protein sequence ID" value="ADF49571.1"/>
    <property type="molecule type" value="mRNA"/>
</dbReference>
<dbReference type="PDB" id="2LKB">
    <property type="method" value="NMR"/>
    <property type="chains" value="A=20-85"/>
</dbReference>
<dbReference type="PDBsum" id="2LKB"/>
<dbReference type="BMRB" id="P86405"/>
<dbReference type="SMR" id="P86405"/>
<dbReference type="EvolutionaryTrace" id="P86405"/>
<dbReference type="GO" id="GO:0005576">
    <property type="term" value="C:extracellular region"/>
    <property type="evidence" value="ECO:0007669"/>
    <property type="project" value="UniProtKB-SubCell"/>
</dbReference>
<dbReference type="GO" id="GO:0019871">
    <property type="term" value="F:sodium channel inhibitor activity"/>
    <property type="evidence" value="ECO:0007669"/>
    <property type="project" value="InterPro"/>
</dbReference>
<dbReference type="GO" id="GO:0090729">
    <property type="term" value="F:toxin activity"/>
    <property type="evidence" value="ECO:0007669"/>
    <property type="project" value="UniProtKB-KW"/>
</dbReference>
<dbReference type="GO" id="GO:0006952">
    <property type="term" value="P:defense response"/>
    <property type="evidence" value="ECO:0007669"/>
    <property type="project" value="InterPro"/>
</dbReference>
<dbReference type="CDD" id="cd23106">
    <property type="entry name" value="neurotoxins_LC_scorpion"/>
    <property type="match status" value="1"/>
</dbReference>
<dbReference type="FunFam" id="3.30.30.10:FF:000002">
    <property type="entry name" value="Alpha-like toxin BmK-M1"/>
    <property type="match status" value="1"/>
</dbReference>
<dbReference type="Gene3D" id="3.30.30.10">
    <property type="entry name" value="Knottin, scorpion toxin-like"/>
    <property type="match status" value="1"/>
</dbReference>
<dbReference type="InterPro" id="IPR044062">
    <property type="entry name" value="LCN-type_CS_alpha_beta_dom"/>
</dbReference>
<dbReference type="InterPro" id="IPR003614">
    <property type="entry name" value="Scorpion_toxin-like"/>
</dbReference>
<dbReference type="InterPro" id="IPR036574">
    <property type="entry name" value="Scorpion_toxin-like_sf"/>
</dbReference>
<dbReference type="InterPro" id="IPR018218">
    <property type="entry name" value="Scorpion_toxinL"/>
</dbReference>
<dbReference type="InterPro" id="IPR002061">
    <property type="entry name" value="Scorpion_toxinL/defensin"/>
</dbReference>
<dbReference type="Pfam" id="PF00537">
    <property type="entry name" value="Toxin_3"/>
    <property type="match status" value="1"/>
</dbReference>
<dbReference type="PRINTS" id="PR00285">
    <property type="entry name" value="SCORPNTOXIN"/>
</dbReference>
<dbReference type="SMART" id="SM00505">
    <property type="entry name" value="Knot1"/>
    <property type="match status" value="1"/>
</dbReference>
<dbReference type="SUPFAM" id="SSF57095">
    <property type="entry name" value="Scorpion toxin-like"/>
    <property type="match status" value="1"/>
</dbReference>
<dbReference type="PROSITE" id="PS51863">
    <property type="entry name" value="LCN_CSAB"/>
    <property type="match status" value="1"/>
</dbReference>
<feature type="signal peptide" evidence="3 4">
    <location>
        <begin position="1"/>
        <end position="19"/>
    </location>
</feature>
<feature type="chain" id="PRO_0000401122" description="Sodium channel neurotoxin MeuNaTxalpha-5" evidence="4">
    <location>
        <begin position="20"/>
        <end position="85"/>
    </location>
</feature>
<feature type="propeptide" id="PRO_0000447444" description="Removed by a carboxypeptidase" evidence="6">
    <location>
        <position position="86"/>
    </location>
</feature>
<feature type="domain" description="LCN-type CS-alpha/beta" evidence="2">
    <location>
        <begin position="21"/>
        <end position="85"/>
    </location>
</feature>
<feature type="disulfide bond" evidence="3 9">
    <location>
        <begin position="31"/>
        <end position="84"/>
    </location>
</feature>
<feature type="disulfide bond" evidence="3 9">
    <location>
        <begin position="35"/>
        <end position="57"/>
    </location>
</feature>
<feature type="disulfide bond" evidence="3 9">
    <location>
        <begin position="43"/>
        <end position="67"/>
    </location>
</feature>
<feature type="disulfide bond" evidence="3 9">
    <location>
        <begin position="47"/>
        <end position="69"/>
    </location>
</feature>
<feature type="strand" evidence="10">
    <location>
        <begin position="22"/>
        <end position="24"/>
    </location>
</feature>
<feature type="strand" evidence="10">
    <location>
        <begin position="27"/>
        <end position="30"/>
    </location>
</feature>
<feature type="helix" evidence="10">
    <location>
        <begin position="38"/>
        <end position="40"/>
    </location>
</feature>
<feature type="helix" evidence="10">
    <location>
        <begin position="42"/>
        <end position="48"/>
    </location>
</feature>
<feature type="strand" evidence="10">
    <location>
        <begin position="54"/>
        <end position="59"/>
    </location>
</feature>
<feature type="strand" evidence="10">
    <location>
        <begin position="61"/>
        <end position="70"/>
    </location>
</feature>
<feature type="strand" evidence="10">
    <location>
        <begin position="80"/>
        <end position="82"/>
    </location>
</feature>
<keyword id="KW-0002">3D-structure</keyword>
<keyword id="KW-0929">Antimicrobial</keyword>
<keyword id="KW-0903">Direct protein sequencing</keyword>
<keyword id="KW-1015">Disulfide bond</keyword>
<keyword id="KW-0872">Ion channel impairing toxin</keyword>
<keyword id="KW-0528">Neurotoxin</keyword>
<keyword id="KW-0964">Secreted</keyword>
<keyword id="KW-0732">Signal</keyword>
<keyword id="KW-0800">Toxin</keyword>
<keyword id="KW-0738">Voltage-gated sodium channel impairing toxin</keyword>
<evidence type="ECO:0000255" key="1"/>
<evidence type="ECO:0000255" key="2">
    <source>
        <dbReference type="PROSITE-ProRule" id="PRU01210"/>
    </source>
</evidence>
<evidence type="ECO:0000269" key="3">
    <source>
    </source>
</evidence>
<evidence type="ECO:0000269" key="4">
    <source ref="2"/>
</evidence>
<evidence type="ECO:0000303" key="5">
    <source>
    </source>
</evidence>
<evidence type="ECO:0000305" key="6"/>
<evidence type="ECO:0000305" key="7">
    <source>
    </source>
</evidence>
<evidence type="ECO:0000305" key="8">
    <source ref="2"/>
</evidence>
<evidence type="ECO:0000312" key="9">
    <source>
        <dbReference type="PDB" id="2LKB"/>
    </source>
</evidence>
<evidence type="ECO:0007829" key="10">
    <source>
        <dbReference type="PDB" id="2LKB"/>
    </source>
</evidence>
<protein>
    <recommendedName>
        <fullName evidence="5">Sodium channel neurotoxin MeuNaTxalpha-5</fullName>
    </recommendedName>
</protein>
<organism>
    <name type="scientific">Mesobuthus eupeus</name>
    <name type="common">Lesser Asian scorpion</name>
    <name type="synonym">Buthus eupeus</name>
    <dbReference type="NCBI Taxonomy" id="34648"/>
    <lineage>
        <taxon>Eukaryota</taxon>
        <taxon>Metazoa</taxon>
        <taxon>Ecdysozoa</taxon>
        <taxon>Arthropoda</taxon>
        <taxon>Chelicerata</taxon>
        <taxon>Arachnida</taxon>
        <taxon>Scorpiones</taxon>
        <taxon>Buthida</taxon>
        <taxon>Buthoidea</taxon>
        <taxon>Buthidae</taxon>
        <taxon>Mesobuthus</taxon>
    </lineage>
</organism>
<accession>P86405</accession>
<accession>D8UWD4</accession>
<accession>E7D081</accession>
<name>SCXN5_MESEU</name>
<proteinExistence type="evidence at protein level"/>